<sequence>MNFEKIQYIERKTGEIKTEKVMGEGALKFLYYNPFGKLALHAVVKRKFLSDWYGRKMSKPESKEKIKSFVEEMEIDMSEYKRPIEDYASFNDFFYRELKDGARKIDYNENVIVSPADGKILAYQNIKEVDKFFVKGSKFTLEEFFNDKELAKKYEDGTFVIVRLAPADYHRFHFPVDGEISEIKKILGYYYSVSTHAIKTNFRIFCENKREYAILKTEKFGDIAMFDIGATMVGGIVQTYKTNSSVKKGEEKGYFLFGGSTCILVFEKNKVVIDKDIIENTQNKIETRIYMGEKFGNEKN</sequence>
<dbReference type="EC" id="4.1.1.65" evidence="1"/>
<dbReference type="EMBL" id="AE009951">
    <property type="protein sequence ID" value="AAL94551.1"/>
    <property type="molecule type" value="Genomic_DNA"/>
</dbReference>
<dbReference type="RefSeq" id="NP_603252.1">
    <property type="nucleotide sequence ID" value="NC_003454.1"/>
</dbReference>
<dbReference type="RefSeq" id="WP_011016325.1">
    <property type="nucleotide sequence ID" value="NZ_CP028101.1"/>
</dbReference>
<dbReference type="SMR" id="Q8RGF2"/>
<dbReference type="FunCoup" id="Q8RGF2">
    <property type="interactions" value="217"/>
</dbReference>
<dbReference type="STRING" id="190304.FN0347"/>
<dbReference type="PaxDb" id="190304-FN0347"/>
<dbReference type="EnsemblBacteria" id="AAL94551">
    <property type="protein sequence ID" value="AAL94551"/>
    <property type="gene ID" value="FN0347"/>
</dbReference>
<dbReference type="GeneID" id="79783356"/>
<dbReference type="KEGG" id="fnu:FN0347"/>
<dbReference type="PATRIC" id="fig|190304.8.peg.925"/>
<dbReference type="eggNOG" id="COG0688">
    <property type="taxonomic scope" value="Bacteria"/>
</dbReference>
<dbReference type="HOGENOM" id="CLU_029061_2_2_0"/>
<dbReference type="InParanoid" id="Q8RGF2"/>
<dbReference type="BioCyc" id="FNUC190304:G1FZS-944-MONOMER"/>
<dbReference type="UniPathway" id="UPA00558">
    <property type="reaction ID" value="UER00616"/>
</dbReference>
<dbReference type="Proteomes" id="UP000002521">
    <property type="component" value="Chromosome"/>
</dbReference>
<dbReference type="GO" id="GO:0005886">
    <property type="term" value="C:plasma membrane"/>
    <property type="evidence" value="ECO:0007669"/>
    <property type="project" value="UniProtKB-SubCell"/>
</dbReference>
<dbReference type="GO" id="GO:0004609">
    <property type="term" value="F:phosphatidylserine decarboxylase activity"/>
    <property type="evidence" value="ECO:0007669"/>
    <property type="project" value="UniProtKB-UniRule"/>
</dbReference>
<dbReference type="GO" id="GO:0006646">
    <property type="term" value="P:phosphatidylethanolamine biosynthetic process"/>
    <property type="evidence" value="ECO:0007669"/>
    <property type="project" value="UniProtKB-UniRule"/>
</dbReference>
<dbReference type="HAMAP" id="MF_00663">
    <property type="entry name" value="PS_decarb_PSD_B_type2"/>
    <property type="match status" value="1"/>
</dbReference>
<dbReference type="InterPro" id="IPR003817">
    <property type="entry name" value="PS_Dcarbxylase"/>
</dbReference>
<dbReference type="InterPro" id="IPR033177">
    <property type="entry name" value="PSD-B"/>
</dbReference>
<dbReference type="InterPro" id="IPR033179">
    <property type="entry name" value="PSD_type2_pro"/>
</dbReference>
<dbReference type="NCBIfam" id="NF001941">
    <property type="entry name" value="PRK00723.1"/>
    <property type="match status" value="1"/>
</dbReference>
<dbReference type="NCBIfam" id="TIGR00163">
    <property type="entry name" value="PS_decarb"/>
    <property type="match status" value="1"/>
</dbReference>
<dbReference type="PANTHER" id="PTHR10067">
    <property type="entry name" value="PHOSPHATIDYLSERINE DECARBOXYLASE"/>
    <property type="match status" value="1"/>
</dbReference>
<dbReference type="PANTHER" id="PTHR10067:SF17">
    <property type="entry name" value="PHOSPHATIDYLSERINE DECARBOXYLASE PROENZYME 2"/>
    <property type="match status" value="1"/>
</dbReference>
<dbReference type="Pfam" id="PF02666">
    <property type="entry name" value="PS_Dcarbxylase"/>
    <property type="match status" value="1"/>
</dbReference>
<reference key="1">
    <citation type="journal article" date="2002" name="J. Bacteriol.">
        <title>Genome sequence and analysis of the oral bacterium Fusobacterium nucleatum strain ATCC 25586.</title>
        <authorList>
            <person name="Kapatral V."/>
            <person name="Anderson I."/>
            <person name="Ivanova N."/>
            <person name="Reznik G."/>
            <person name="Los T."/>
            <person name="Lykidis A."/>
            <person name="Bhattacharyya A."/>
            <person name="Bartman A."/>
            <person name="Gardner W."/>
            <person name="Grechkin G."/>
            <person name="Zhu L."/>
            <person name="Vasieva O."/>
            <person name="Chu L."/>
            <person name="Kogan Y."/>
            <person name="Chaga O."/>
            <person name="Goltsman E."/>
            <person name="Bernal A."/>
            <person name="Larsen N."/>
            <person name="D'Souza M."/>
            <person name="Walunas T."/>
            <person name="Pusch G."/>
            <person name="Haselkorn R."/>
            <person name="Fonstein M."/>
            <person name="Kyrpides N.C."/>
            <person name="Overbeek R."/>
        </authorList>
    </citation>
    <scope>NUCLEOTIDE SEQUENCE [LARGE SCALE GENOMIC DNA]</scope>
    <source>
        <strain>ATCC 25586 / DSM 15643 / BCRC 10681 / CIP 101130 / JCM 8532 / KCTC 2640 / LMG 13131 / VPI 4355</strain>
    </source>
</reference>
<proteinExistence type="inferred from homology"/>
<keyword id="KW-1003">Cell membrane</keyword>
<keyword id="KW-0210">Decarboxylase</keyword>
<keyword id="KW-0444">Lipid biosynthesis</keyword>
<keyword id="KW-0443">Lipid metabolism</keyword>
<keyword id="KW-0456">Lyase</keyword>
<keyword id="KW-0472">Membrane</keyword>
<keyword id="KW-0594">Phospholipid biosynthesis</keyword>
<keyword id="KW-1208">Phospholipid metabolism</keyword>
<keyword id="KW-0670">Pyruvate</keyword>
<keyword id="KW-1185">Reference proteome</keyword>
<keyword id="KW-0865">Zymogen</keyword>
<organism>
    <name type="scientific">Fusobacterium nucleatum subsp. nucleatum (strain ATCC 25586 / DSM 15643 / BCRC 10681 / CIP 101130 / JCM 8532 / KCTC 2640 / LMG 13131 / VPI 4355)</name>
    <dbReference type="NCBI Taxonomy" id="190304"/>
    <lineage>
        <taxon>Bacteria</taxon>
        <taxon>Fusobacteriati</taxon>
        <taxon>Fusobacteriota</taxon>
        <taxon>Fusobacteriia</taxon>
        <taxon>Fusobacteriales</taxon>
        <taxon>Fusobacteriaceae</taxon>
        <taxon>Fusobacterium</taxon>
    </lineage>
</organism>
<accession>Q8RGF2</accession>
<gene>
    <name evidence="1" type="primary">psd</name>
    <name type="ordered locus">FN0347</name>
</gene>
<protein>
    <recommendedName>
        <fullName evidence="1">Phosphatidylserine decarboxylase proenzyme</fullName>
        <ecNumber evidence="1">4.1.1.65</ecNumber>
    </recommendedName>
    <component>
        <recommendedName>
            <fullName evidence="1">Phosphatidylserine decarboxylase alpha chain</fullName>
        </recommendedName>
    </component>
    <component>
        <recommendedName>
            <fullName evidence="1">Phosphatidylserine decarboxylase beta chain</fullName>
        </recommendedName>
    </component>
</protein>
<name>PSD_FUSNN</name>
<comment type="function">
    <text evidence="1">Catalyzes the formation of phosphatidylethanolamine (PtdEtn) from phosphatidylserine (PtdSer).</text>
</comment>
<comment type="catalytic activity">
    <reaction evidence="1">
        <text>a 1,2-diacyl-sn-glycero-3-phospho-L-serine + H(+) = a 1,2-diacyl-sn-glycero-3-phosphoethanolamine + CO2</text>
        <dbReference type="Rhea" id="RHEA:20828"/>
        <dbReference type="ChEBI" id="CHEBI:15378"/>
        <dbReference type="ChEBI" id="CHEBI:16526"/>
        <dbReference type="ChEBI" id="CHEBI:57262"/>
        <dbReference type="ChEBI" id="CHEBI:64612"/>
        <dbReference type="EC" id="4.1.1.65"/>
    </reaction>
</comment>
<comment type="cofactor">
    <cofactor evidence="1">
        <name>pyruvate</name>
        <dbReference type="ChEBI" id="CHEBI:15361"/>
    </cofactor>
    <text evidence="1">Binds 1 pyruvoyl group covalently per subunit.</text>
</comment>
<comment type="pathway">
    <text evidence="1">Phospholipid metabolism; phosphatidylethanolamine biosynthesis; phosphatidylethanolamine from CDP-diacylglycerol: step 2/2.</text>
</comment>
<comment type="subunit">
    <text evidence="1">Heterodimer of a large membrane-associated beta subunit and a small pyruvoyl-containing alpha subunit.</text>
</comment>
<comment type="subcellular location">
    <subcellularLocation>
        <location evidence="1">Cell membrane</location>
        <topology evidence="1">Peripheral membrane protein</topology>
    </subcellularLocation>
</comment>
<comment type="PTM">
    <text evidence="1">Is synthesized initially as an inactive proenzyme. Formation of the active enzyme involves a self-maturation process in which the active site pyruvoyl group is generated from an internal serine residue via an autocatalytic post-translational modification. Two non-identical subunits are generated from the proenzyme in this reaction, and the pyruvate is formed at the N-terminus of the alpha chain, which is derived from the carboxyl end of the proenzyme. The autoendoproteolytic cleavage occurs by a canonical serine protease mechanism, in which the side chain hydroxyl group of the serine supplies its oxygen atom to form the C-terminus of the beta chain, while the remainder of the serine residue undergoes an oxidative deamination to produce ammonia and the pyruvoyl prosthetic group on the alpha chain. During this reaction, the Ser that is part of the protease active site of the proenzyme becomes the pyruvoyl prosthetic group, which constitutes an essential element of the active site of the mature decarboxylase.</text>
</comment>
<comment type="similarity">
    <text evidence="1">Belongs to the phosphatidylserine decarboxylase family. PSD-B subfamily. Prokaryotic type II sub-subfamily.</text>
</comment>
<evidence type="ECO:0000255" key="1">
    <source>
        <dbReference type="HAMAP-Rule" id="MF_00663"/>
    </source>
</evidence>
<feature type="chain" id="PRO_0000029745" description="Phosphatidylserine decarboxylase beta chain" evidence="1">
    <location>
        <begin position="1"/>
        <end position="259"/>
    </location>
</feature>
<feature type="chain" id="PRO_0000029746" description="Phosphatidylserine decarboxylase alpha chain" evidence="1">
    <location>
        <begin position="260"/>
        <end position="300"/>
    </location>
</feature>
<feature type="active site" description="Charge relay system; for autoendoproteolytic cleavage activity" evidence="1">
    <location>
        <position position="117"/>
    </location>
</feature>
<feature type="active site" description="Charge relay system; for autoendoproteolytic cleavage activity" evidence="1">
    <location>
        <position position="173"/>
    </location>
</feature>
<feature type="active site" description="Charge relay system; for autoendoproteolytic cleavage activity" evidence="1">
    <location>
        <position position="260"/>
    </location>
</feature>
<feature type="active site" description="Schiff-base intermediate with substrate; via pyruvic acid; for decarboxylase activity" evidence="1">
    <location>
        <position position="260"/>
    </location>
</feature>
<feature type="site" description="Cleavage (non-hydrolytic); by autocatalysis" evidence="1">
    <location>
        <begin position="259"/>
        <end position="260"/>
    </location>
</feature>
<feature type="modified residue" description="Pyruvic acid (Ser); by autocatalysis" evidence="1">
    <location>
        <position position="260"/>
    </location>
</feature>